<keyword id="KW-0966">Cell projection</keyword>
<keyword id="KW-0969">Cilium</keyword>
<keyword id="KW-0221">Differentiation</keyword>
<keyword id="KW-0282">Flagellum</keyword>
<keyword id="KW-0552">Olfaction</keyword>
<keyword id="KW-1185">Reference proteome</keyword>
<keyword id="KW-0716">Sensory transduction</keyword>
<keyword id="KW-0744">Spermatogenesis</keyword>
<comment type="function">
    <text evidence="1 2">Cilium- and flagellum-associated protein (By similarity). In the olfactory epithelium, regulates the speed of activation and termination of the odor response and thus contributes to the robustness of olfactory transduction pathways (By similarity). Required for sperm flagellum assembly and stability (By similarity).</text>
</comment>
<comment type="subcellular location">
    <subcellularLocation>
        <location evidence="2">Cell projection</location>
        <location evidence="2">Cilium</location>
    </subcellularLocation>
    <subcellularLocation>
        <location evidence="1">Cell projection</location>
        <location evidence="1">Cilium</location>
        <location evidence="1">Flagellum</location>
    </subcellularLocation>
    <text evidence="1">Localizes to the midpiece of the sperm flagellum.</text>
</comment>
<proteinExistence type="inferred from homology"/>
<gene>
    <name evidence="1" type="primary">CFAP69</name>
</gene>
<feature type="chain" id="PRO_0000366026" description="Cilia- and flagella-associated protein 69" evidence="3">
    <location>
        <begin position="1"/>
        <end position="941"/>
    </location>
</feature>
<evidence type="ECO:0000250" key="1">
    <source>
        <dbReference type="UniProtKB" id="A5D8W1"/>
    </source>
</evidence>
<evidence type="ECO:0000250" key="2">
    <source>
        <dbReference type="UniProtKB" id="Q8BH53"/>
    </source>
</evidence>
<evidence type="ECO:0000305" key="3"/>
<protein>
    <recommendedName>
        <fullName evidence="1">Cilia- and flagella-associated protein 69</fullName>
    </recommendedName>
</protein>
<reference key="1">
    <citation type="submission" date="2008-01" db="EMBL/GenBank/DDBJ databases">
        <title>NISC comparative sequencing initiative.</title>
        <authorList>
            <person name="Antonellis A."/>
            <person name="Benjamin B."/>
            <person name="Blakesley R.W."/>
            <person name="Bouffard G.G."/>
            <person name="Brinkley C."/>
            <person name="Brooks S."/>
            <person name="Chu G."/>
            <person name="Chub I."/>
            <person name="Coleman H."/>
            <person name="Fuksenko T."/>
            <person name="Gestole M."/>
            <person name="Gregory M."/>
            <person name="Guan X."/>
            <person name="Gupta J."/>
            <person name="Gurson N."/>
            <person name="Han E."/>
            <person name="Han J."/>
            <person name="Hansen N."/>
            <person name="Hargrove A."/>
            <person name="Hines-Harris K."/>
            <person name="Ho S.-L."/>
            <person name="Hu P."/>
            <person name="Hunter G."/>
            <person name="Hurle B."/>
            <person name="Idol J.R."/>
            <person name="Johnson T."/>
            <person name="Knight E."/>
            <person name="Kwong P."/>
            <person name="Lee-Lin S.-Q."/>
            <person name="Legaspi R."/>
            <person name="Madden M."/>
            <person name="Maduro Q.L."/>
            <person name="Maduro V.B."/>
            <person name="Margulies E.H."/>
            <person name="Masiello C."/>
            <person name="Maskeri B."/>
            <person name="McDowell J."/>
            <person name="Merkulov G."/>
            <person name="Montemayor C."/>
            <person name="Mullikin J.C."/>
            <person name="Park M."/>
            <person name="Prasad A."/>
            <person name="Ramsahoye C."/>
            <person name="Reddix-Dugue N."/>
            <person name="Riebow N."/>
            <person name="Schandler K."/>
            <person name="Schueler M.G."/>
            <person name="Sison C."/>
            <person name="Smith L."/>
            <person name="Stantripop S."/>
            <person name="Thomas J.W."/>
            <person name="Thomas P.J."/>
            <person name="Tsipouri V."/>
            <person name="Young A."/>
            <person name="Green E.D."/>
        </authorList>
    </citation>
    <scope>NUCLEOTIDE SEQUENCE [LARGE SCALE GENOMIC DNA]</scope>
</reference>
<dbReference type="EMBL" id="DP000590">
    <property type="protein sequence ID" value="ABZ80267.1"/>
    <property type="molecule type" value="Genomic_DNA"/>
</dbReference>
<dbReference type="RefSeq" id="XP_002751692.2">
    <property type="nucleotide sequence ID" value="XM_002751646.5"/>
</dbReference>
<dbReference type="SMR" id="B0VXE6"/>
<dbReference type="FunCoup" id="B0VXE6">
    <property type="interactions" value="178"/>
</dbReference>
<dbReference type="STRING" id="9483.ENSCJAP00000076058"/>
<dbReference type="Ensembl" id="ENSCJAT00000027703.5">
    <property type="protein sequence ID" value="ENSCJAP00000026215.2"/>
    <property type="gene ID" value="ENSCJAG00000014219.5"/>
</dbReference>
<dbReference type="GeneID" id="100405268"/>
<dbReference type="KEGG" id="cjc:100405268"/>
<dbReference type="CTD" id="79846"/>
<dbReference type="eggNOG" id="ENOG502QV2V">
    <property type="taxonomic scope" value="Eukaryota"/>
</dbReference>
<dbReference type="GeneTree" id="ENSGT00390000014274"/>
<dbReference type="HOGENOM" id="CLU_322533_0_0_1"/>
<dbReference type="InParanoid" id="B0VXE6"/>
<dbReference type="OrthoDB" id="191673at2759"/>
<dbReference type="TreeFam" id="TF328355"/>
<dbReference type="Proteomes" id="UP000008225">
    <property type="component" value="Chromosome 8"/>
</dbReference>
<dbReference type="Bgee" id="ENSCJAG00000014219">
    <property type="expression patterns" value="Expressed in kidney and 6 other cell types or tissues"/>
</dbReference>
<dbReference type="GO" id="GO:0005737">
    <property type="term" value="C:cytoplasm"/>
    <property type="evidence" value="ECO:0000250"/>
    <property type="project" value="UniProtKB"/>
</dbReference>
<dbReference type="GO" id="GO:0097730">
    <property type="term" value="C:non-motile cilium"/>
    <property type="evidence" value="ECO:0000250"/>
    <property type="project" value="UniProtKB"/>
</dbReference>
<dbReference type="GO" id="GO:0097225">
    <property type="term" value="C:sperm midpiece"/>
    <property type="evidence" value="ECO:0000250"/>
    <property type="project" value="UniProtKB"/>
</dbReference>
<dbReference type="GO" id="GO:0030154">
    <property type="term" value="P:cell differentiation"/>
    <property type="evidence" value="ECO:0007669"/>
    <property type="project" value="UniProtKB-KW"/>
</dbReference>
<dbReference type="GO" id="GO:0042048">
    <property type="term" value="P:olfactory behavior"/>
    <property type="evidence" value="ECO:0000250"/>
    <property type="project" value="UniProtKB"/>
</dbReference>
<dbReference type="GO" id="GO:1905516">
    <property type="term" value="P:positive regulation of fertilization"/>
    <property type="evidence" value="ECO:0000250"/>
    <property type="project" value="UniProtKB"/>
</dbReference>
<dbReference type="GO" id="GO:1902093">
    <property type="term" value="P:positive regulation of flagellated sperm motility"/>
    <property type="evidence" value="ECO:0000250"/>
    <property type="project" value="UniProtKB"/>
</dbReference>
<dbReference type="GO" id="GO:1990834">
    <property type="term" value="P:response to odorant"/>
    <property type="evidence" value="ECO:0000250"/>
    <property type="project" value="UniProtKB"/>
</dbReference>
<dbReference type="GO" id="GO:0007608">
    <property type="term" value="P:sensory perception of smell"/>
    <property type="evidence" value="ECO:0007669"/>
    <property type="project" value="UniProtKB-KW"/>
</dbReference>
<dbReference type="GO" id="GO:0007283">
    <property type="term" value="P:spermatogenesis"/>
    <property type="evidence" value="ECO:0007669"/>
    <property type="project" value="UniProtKB-KW"/>
</dbReference>
<dbReference type="Gene3D" id="1.25.10.10">
    <property type="entry name" value="Leucine-rich Repeat Variant"/>
    <property type="match status" value="1"/>
</dbReference>
<dbReference type="InterPro" id="IPR011989">
    <property type="entry name" value="ARM-like"/>
</dbReference>
<dbReference type="InterPro" id="IPR016024">
    <property type="entry name" value="ARM-type_fold"/>
</dbReference>
<dbReference type="InterPro" id="IPR048732">
    <property type="entry name" value="CFA69"/>
</dbReference>
<dbReference type="InterPro" id="IPR048733">
    <property type="entry name" value="CFA69_ARM_dom"/>
</dbReference>
<dbReference type="PANTHER" id="PTHR14716">
    <property type="entry name" value="CILIA- AND FLAGELLA-ASSOCIATED PROTEIN 69"/>
    <property type="match status" value="1"/>
</dbReference>
<dbReference type="PANTHER" id="PTHR14716:SF0">
    <property type="entry name" value="CILIA- AND FLAGELLA-ASSOCIATED PROTEIN 69"/>
    <property type="match status" value="1"/>
</dbReference>
<dbReference type="Pfam" id="PF21049">
    <property type="entry name" value="CFA69_ARM_rpt"/>
    <property type="match status" value="1"/>
</dbReference>
<dbReference type="SUPFAM" id="SSF48371">
    <property type="entry name" value="ARM repeat"/>
    <property type="match status" value="1"/>
</dbReference>
<name>CFA69_CALJA</name>
<accession>B0VXE6</accession>
<organism>
    <name type="scientific">Callithrix jacchus</name>
    <name type="common">White-tufted-ear marmoset</name>
    <dbReference type="NCBI Taxonomy" id="9483"/>
    <lineage>
        <taxon>Eukaryota</taxon>
        <taxon>Metazoa</taxon>
        <taxon>Chordata</taxon>
        <taxon>Craniata</taxon>
        <taxon>Vertebrata</taxon>
        <taxon>Euteleostomi</taxon>
        <taxon>Mammalia</taxon>
        <taxon>Eutheria</taxon>
        <taxon>Euarchontoglires</taxon>
        <taxon>Primates</taxon>
        <taxon>Haplorrhini</taxon>
        <taxon>Platyrrhini</taxon>
        <taxon>Cebidae</taxon>
        <taxon>Callitrichinae</taxon>
        <taxon>Callithrix</taxon>
        <taxon>Callithrix</taxon>
    </lineage>
</organism>
<sequence>MWTEKAAAMAEAQESGCRNKSSISRQTPVAGAVTEDDEAQGVFKPMDLNHVIKLLEETNKDGLEEKQLKFVKKLVQCYQNGLPLRDLAQIFKILNLCAGKIKNQPRFIESAYDIIKLCGLPFLKKKVSDEITYAEDTANSIALLGDLMKIPSSELRIQICKCIVDFYHAEPPKKHIPGYQQACSSYKIQMAEVGGLAKTMVQAVTLLENQLVEKLWVLKVLQHLSTSEVNCSIMMKAQAASGICAHLNDPDPSGQLLFRSSEILWNLLEKSSKEEILPQLSNLECLLALKEVFKNLFMRGFSHYDRQLRNDILVITTIIAQNPEAPMIECGFAKDLILFATFNEVKSQNILVKGLKLSNSYEDFELKKLLFNIIVILCKDLPTIQLLIEGSVVLALFTYVKKPEKQRTIDWSAAQYEELQLHAIATLSSVAPLLIEEYMSCQGNAQVLAFLEWCEIEDSFFSHGNSFHGTGGRGNKFAQMRYSLRLLRAMVYLEDETVNTDLCEKGTIQQMIGIFKNIISKTNEKEEAIVLEIQSDILLILSGLCEHHIQRKEIFGTEGVDIVLHVMKTDPRKLQSGLGYNVLLFSTLDSIWCCILGCYPSEDYFLEKEGIFLLLDVLALNEKKFCNLILGIMVEFCDNPKTAAHVNAWRGKKDQTAASLLIKLWRKEEKELGVKRDKNGKIIDTKKPLFTSFQEEQKIIPLPANCPSIAVMDVSENIRAKIYAILGKLDFENLPGLSAEDFVTLCIIHRYLDFKIGEIWNEIYEEIKLEKLRPVTTDKKALEAITTASENIGKMVASLQSEIIESQACQDVQNEQKVYAKIQATHKQRELANKSWGNFLARTSNAKTLKKAKRLQEKAIKASRYHERPQHAIFHPTDIKGLNTTVPSGGVVTVESTPARLVGGPLADTDIALKKLPIRGGALQRVKAVKIEEAPKKSIPT</sequence>